<evidence type="ECO:0000255" key="1"/>
<evidence type="ECO:0000256" key="2">
    <source>
        <dbReference type="SAM" id="MobiDB-lite"/>
    </source>
</evidence>
<evidence type="ECO:0000269" key="3">
    <source>
    </source>
</evidence>
<evidence type="ECO:0000269" key="4">
    <source>
    </source>
</evidence>
<evidence type="ECO:0000269" key="5">
    <source>
    </source>
</evidence>
<evidence type="ECO:0000269" key="6">
    <source>
    </source>
</evidence>
<evidence type="ECO:0000305" key="7"/>
<evidence type="ECO:0000312" key="8">
    <source>
        <dbReference type="EMBL" id="AAF51211.1"/>
    </source>
</evidence>
<evidence type="ECO:0000312" key="9">
    <source>
        <dbReference type="EMBL" id="AAL48842.1"/>
    </source>
</evidence>
<evidence type="ECO:0000312" key="10">
    <source>
        <dbReference type="EMBL" id="CAB40838.1"/>
    </source>
</evidence>
<evidence type="ECO:0000312" key="11">
    <source>
        <dbReference type="EMBL" id="CAB55761.1"/>
    </source>
</evidence>
<evidence type="ECO:0000312" key="12">
    <source>
        <dbReference type="FlyBase" id="FBgn0026324"/>
    </source>
</evidence>
<comment type="function">
    <text evidence="3 5">TFIID is a multimeric protein complex that plays a central role in mediating promoter responses to various activators and repressors.</text>
</comment>
<comment type="subunit">
    <text evidence="3 5">Belongs to the TFIID complex which is composed of TATA binding protein (Tbp) and a number of TBP-associated factors (TAFs). The N-terminus interacts with the histone fold of Taf8.</text>
</comment>
<comment type="subcellular location">
    <subcellularLocation>
        <location evidence="3">Cytoplasm</location>
    </subcellularLocation>
    <subcellularLocation>
        <location evidence="3 5">Nucleus</location>
    </subcellularLocation>
</comment>
<comment type="tissue specificity">
    <text evidence="3">At embryonic stage 9, expression is seen in the mesodermal layer and midgut primordia. The mesoderm-specific expression persists in later stages of development and at its highest level is detected in midgut, hindgut, and differentiating somatic muscle fibers. Coexpressed with Taf10 in the lateral epidermis and anal plate.</text>
</comment>
<comment type="developmental stage">
    <text evidence="3 5">Expressed both maternally and zygotically throughout development.</text>
</comment>
<comment type="similarity">
    <text evidence="1">Belongs to the TAF10 family.</text>
</comment>
<keyword id="KW-0963">Cytoplasm</keyword>
<keyword id="KW-0539">Nucleus</keyword>
<keyword id="KW-1185">Reference proteome</keyword>
<keyword id="KW-0804">Transcription</keyword>
<keyword id="KW-0805">Transcription regulation</keyword>
<sequence length="146" mass="15784">MVGSNFGIIYHNSAGGASSHGQSSGGGGGGDRDRTTPSSHLSDFMSQLEDYTPLIPDAVTSHYLNMGGFQSDDKRIVRLISLAAQKYMSDIIDDALQHSKARTHMQTTNTPGGSKAKDRKFTLTMEDLQPALADYGINVRKVDYSQ</sequence>
<proteinExistence type="evidence at protein level"/>
<accession>Q9XZT7</accession>
<reference evidence="7 11" key="1">
    <citation type="journal article" date="2000" name="Mol. Cell. Biol.">
        <title>Two novel Drosophila TAFIIs have homology with human TAFII30 and are differentially regulated during development.</title>
        <authorList>
            <person name="Georgieva S."/>
            <person name="Kirschner D.B."/>
            <person name="Jagla T."/>
            <person name="Nabirochkina E."/>
            <person name="Hanke S."/>
            <person name="Schenkel H."/>
            <person name="de Lorenzo C."/>
            <person name="Sinha P."/>
            <person name="Jagla K."/>
            <person name="Mechler B."/>
            <person name="Tora L."/>
        </authorList>
    </citation>
    <scope>NUCLEOTIDE SEQUENCE [MRNA]</scope>
    <scope>FUNCTION</scope>
    <scope>SUBUNIT</scope>
    <scope>SUBCELLULAR LOCATION</scope>
    <scope>TISSUE SPECIFICITY</scope>
    <scope>DEVELOPMENTAL STAGE</scope>
    <source>
        <tissue evidence="3">Embryo</tissue>
    </source>
</reference>
<reference evidence="7 10" key="2">
    <citation type="journal article" date="2001" name="Mol. Cell. Biol.">
        <title>Prodos is a conserved transcriptional regulator that interacts with dTAF(II)16 in Drosophila melanogaster.</title>
        <authorList>
            <person name="Hernandez-Hernandez A."/>
            <person name="Ferrus A."/>
        </authorList>
    </citation>
    <scope>NUCLEOTIDE SEQUENCE [MRNA]</scope>
    <scope>FUNCTION</scope>
    <scope>INTERACTION WITH TAF8</scope>
    <scope>SUBCELLULAR LOCATION</scope>
</reference>
<reference evidence="8" key="3">
    <citation type="journal article" date="2000" name="Science">
        <title>The genome sequence of Drosophila melanogaster.</title>
        <authorList>
            <person name="Adams M.D."/>
            <person name="Celniker S.E."/>
            <person name="Holt R.A."/>
            <person name="Evans C.A."/>
            <person name="Gocayne J.D."/>
            <person name="Amanatides P.G."/>
            <person name="Scherer S.E."/>
            <person name="Li P.W."/>
            <person name="Hoskins R.A."/>
            <person name="Galle R.F."/>
            <person name="George R.A."/>
            <person name="Lewis S.E."/>
            <person name="Richards S."/>
            <person name="Ashburner M."/>
            <person name="Henderson S.N."/>
            <person name="Sutton G.G."/>
            <person name="Wortman J.R."/>
            <person name="Yandell M.D."/>
            <person name="Zhang Q."/>
            <person name="Chen L.X."/>
            <person name="Brandon R.C."/>
            <person name="Rogers Y.-H.C."/>
            <person name="Blazej R.G."/>
            <person name="Champe M."/>
            <person name="Pfeiffer B.D."/>
            <person name="Wan K.H."/>
            <person name="Doyle C."/>
            <person name="Baxter E.G."/>
            <person name="Helt G."/>
            <person name="Nelson C.R."/>
            <person name="Miklos G.L.G."/>
            <person name="Abril J.F."/>
            <person name="Agbayani A."/>
            <person name="An H.-J."/>
            <person name="Andrews-Pfannkoch C."/>
            <person name="Baldwin D."/>
            <person name="Ballew R.M."/>
            <person name="Basu A."/>
            <person name="Baxendale J."/>
            <person name="Bayraktaroglu L."/>
            <person name="Beasley E.M."/>
            <person name="Beeson K.Y."/>
            <person name="Benos P.V."/>
            <person name="Berman B.P."/>
            <person name="Bhandari D."/>
            <person name="Bolshakov S."/>
            <person name="Borkova D."/>
            <person name="Botchan M.R."/>
            <person name="Bouck J."/>
            <person name="Brokstein P."/>
            <person name="Brottier P."/>
            <person name="Burtis K.C."/>
            <person name="Busam D.A."/>
            <person name="Butler H."/>
            <person name="Cadieu E."/>
            <person name="Center A."/>
            <person name="Chandra I."/>
            <person name="Cherry J.M."/>
            <person name="Cawley S."/>
            <person name="Dahlke C."/>
            <person name="Davenport L.B."/>
            <person name="Davies P."/>
            <person name="de Pablos B."/>
            <person name="Delcher A."/>
            <person name="Deng Z."/>
            <person name="Mays A.D."/>
            <person name="Dew I."/>
            <person name="Dietz S.M."/>
            <person name="Dodson K."/>
            <person name="Doup L.E."/>
            <person name="Downes M."/>
            <person name="Dugan-Rocha S."/>
            <person name="Dunkov B.C."/>
            <person name="Dunn P."/>
            <person name="Durbin K.J."/>
            <person name="Evangelista C.C."/>
            <person name="Ferraz C."/>
            <person name="Ferriera S."/>
            <person name="Fleischmann W."/>
            <person name="Fosler C."/>
            <person name="Gabrielian A.E."/>
            <person name="Garg N.S."/>
            <person name="Gelbart W.M."/>
            <person name="Glasser K."/>
            <person name="Glodek A."/>
            <person name="Gong F."/>
            <person name="Gorrell J.H."/>
            <person name="Gu Z."/>
            <person name="Guan P."/>
            <person name="Harris M."/>
            <person name="Harris N.L."/>
            <person name="Harvey D.A."/>
            <person name="Heiman T.J."/>
            <person name="Hernandez J.R."/>
            <person name="Houck J."/>
            <person name="Hostin D."/>
            <person name="Houston K.A."/>
            <person name="Howland T.J."/>
            <person name="Wei M.-H."/>
            <person name="Ibegwam C."/>
            <person name="Jalali M."/>
            <person name="Kalush F."/>
            <person name="Karpen G.H."/>
            <person name="Ke Z."/>
            <person name="Kennison J.A."/>
            <person name="Ketchum K.A."/>
            <person name="Kimmel B.E."/>
            <person name="Kodira C.D."/>
            <person name="Kraft C.L."/>
            <person name="Kravitz S."/>
            <person name="Kulp D."/>
            <person name="Lai Z."/>
            <person name="Lasko P."/>
            <person name="Lei Y."/>
            <person name="Levitsky A.A."/>
            <person name="Li J.H."/>
            <person name="Li Z."/>
            <person name="Liang Y."/>
            <person name="Lin X."/>
            <person name="Liu X."/>
            <person name="Mattei B."/>
            <person name="McIntosh T.C."/>
            <person name="McLeod M.P."/>
            <person name="McPherson D."/>
            <person name="Merkulov G."/>
            <person name="Milshina N.V."/>
            <person name="Mobarry C."/>
            <person name="Morris J."/>
            <person name="Moshrefi A."/>
            <person name="Mount S.M."/>
            <person name="Moy M."/>
            <person name="Murphy B."/>
            <person name="Murphy L."/>
            <person name="Muzny D.M."/>
            <person name="Nelson D.L."/>
            <person name="Nelson D.R."/>
            <person name="Nelson K.A."/>
            <person name="Nixon K."/>
            <person name="Nusskern D.R."/>
            <person name="Pacleb J.M."/>
            <person name="Palazzolo M."/>
            <person name="Pittman G.S."/>
            <person name="Pan S."/>
            <person name="Pollard J."/>
            <person name="Puri V."/>
            <person name="Reese M.G."/>
            <person name="Reinert K."/>
            <person name="Remington K."/>
            <person name="Saunders R.D.C."/>
            <person name="Scheeler F."/>
            <person name="Shen H."/>
            <person name="Shue B.C."/>
            <person name="Siden-Kiamos I."/>
            <person name="Simpson M."/>
            <person name="Skupski M.P."/>
            <person name="Smith T.J."/>
            <person name="Spier E."/>
            <person name="Spradling A.C."/>
            <person name="Stapleton M."/>
            <person name="Strong R."/>
            <person name="Sun E."/>
            <person name="Svirskas R."/>
            <person name="Tector C."/>
            <person name="Turner R."/>
            <person name="Venter E."/>
            <person name="Wang A.H."/>
            <person name="Wang X."/>
            <person name="Wang Z.-Y."/>
            <person name="Wassarman D.A."/>
            <person name="Weinstock G.M."/>
            <person name="Weissenbach J."/>
            <person name="Williams S.M."/>
            <person name="Woodage T."/>
            <person name="Worley K.C."/>
            <person name="Wu D."/>
            <person name="Yang S."/>
            <person name="Yao Q.A."/>
            <person name="Ye J."/>
            <person name="Yeh R.-F."/>
            <person name="Zaveri J.S."/>
            <person name="Zhan M."/>
            <person name="Zhang G."/>
            <person name="Zhao Q."/>
            <person name="Zheng L."/>
            <person name="Zheng X.H."/>
            <person name="Zhong F.N."/>
            <person name="Zhong W."/>
            <person name="Zhou X."/>
            <person name="Zhu S.C."/>
            <person name="Zhu X."/>
            <person name="Smith H.O."/>
            <person name="Gibbs R.A."/>
            <person name="Myers E.W."/>
            <person name="Rubin G.M."/>
            <person name="Venter J.C."/>
        </authorList>
    </citation>
    <scope>NUCLEOTIDE SEQUENCE [LARGE SCALE GENOMIC DNA]</scope>
    <source>
        <strain evidence="4">Berkeley</strain>
    </source>
</reference>
<reference evidence="7 8" key="4">
    <citation type="journal article" date="2002" name="Genome Biol.">
        <title>Annotation of the Drosophila melanogaster euchromatic genome: a systematic review.</title>
        <authorList>
            <person name="Misra S."/>
            <person name="Crosby M.A."/>
            <person name="Mungall C.J."/>
            <person name="Matthews B.B."/>
            <person name="Campbell K.S."/>
            <person name="Hradecky P."/>
            <person name="Huang Y."/>
            <person name="Kaminker J.S."/>
            <person name="Millburn G.H."/>
            <person name="Prochnik S.E."/>
            <person name="Smith C.D."/>
            <person name="Tupy J.L."/>
            <person name="Whitfield E.J."/>
            <person name="Bayraktaroglu L."/>
            <person name="Berman B.P."/>
            <person name="Bettencourt B.R."/>
            <person name="Celniker S.E."/>
            <person name="de Grey A.D.N.J."/>
            <person name="Drysdale R.A."/>
            <person name="Harris N.L."/>
            <person name="Richter J."/>
            <person name="Russo S."/>
            <person name="Schroeder A.J."/>
            <person name="Shu S.Q."/>
            <person name="Stapleton M."/>
            <person name="Yamada C."/>
            <person name="Ashburner M."/>
            <person name="Gelbart W.M."/>
            <person name="Rubin G.M."/>
            <person name="Lewis S.E."/>
        </authorList>
    </citation>
    <scope>GENOME REANNOTATION</scope>
    <source>
        <strain>Berkeley</strain>
    </source>
</reference>
<reference evidence="9" key="5">
    <citation type="journal article" date="2002" name="Genome Biol.">
        <title>A Drosophila full-length cDNA resource.</title>
        <authorList>
            <person name="Stapleton M."/>
            <person name="Carlson J.W."/>
            <person name="Brokstein P."/>
            <person name="Yu C."/>
            <person name="Champe M."/>
            <person name="George R.A."/>
            <person name="Guarin H."/>
            <person name="Kronmiller B."/>
            <person name="Pacleb J.M."/>
            <person name="Park S."/>
            <person name="Wan K.H."/>
            <person name="Rubin G.M."/>
            <person name="Celniker S.E."/>
        </authorList>
    </citation>
    <scope>NUCLEOTIDE SEQUENCE [LARGE SCALE MRNA]</scope>
    <source>
        <strain evidence="9">Berkeley</strain>
        <tissue evidence="6">Embryo</tissue>
    </source>
</reference>
<organism>
    <name type="scientific">Drosophila melanogaster</name>
    <name type="common">Fruit fly</name>
    <dbReference type="NCBI Taxonomy" id="7227"/>
    <lineage>
        <taxon>Eukaryota</taxon>
        <taxon>Metazoa</taxon>
        <taxon>Ecdysozoa</taxon>
        <taxon>Arthropoda</taxon>
        <taxon>Hexapoda</taxon>
        <taxon>Insecta</taxon>
        <taxon>Pterygota</taxon>
        <taxon>Neoptera</taxon>
        <taxon>Endopterygota</taxon>
        <taxon>Diptera</taxon>
        <taxon>Brachycera</taxon>
        <taxon>Muscomorpha</taxon>
        <taxon>Ephydroidea</taxon>
        <taxon>Drosophilidae</taxon>
        <taxon>Drosophila</taxon>
        <taxon>Sophophora</taxon>
    </lineage>
</organism>
<feature type="chain" id="PRO_0000118900" description="Transcription initiation factor TFIID subunit 10b">
    <location>
        <begin position="1"/>
        <end position="146"/>
    </location>
</feature>
<feature type="region of interest" description="Disordered" evidence="2">
    <location>
        <begin position="16"/>
        <end position="43"/>
    </location>
</feature>
<name>TAFAB_DROME</name>
<gene>
    <name evidence="8 12" type="primary">Taf10b</name>
    <name evidence="9" type="synonym">Taf16</name>
    <name type="ORF">CG3069</name>
</gene>
<protein>
    <recommendedName>
        <fullName>Transcription initiation factor TFIID subunit 10b</fullName>
    </recommendedName>
    <alternativeName>
        <fullName>Transcription initiation factor TFIID 16 kDa subunit</fullName>
        <shortName>TAFII-16</shortName>
        <shortName>TAFII16</shortName>
    </alternativeName>
    <alternativeName>
        <fullName>dTAF(II)16</fullName>
    </alternativeName>
</protein>
<dbReference type="EMBL" id="AJ243837">
    <property type="protein sequence ID" value="CAB55761.1"/>
    <property type="molecule type" value="mRNA"/>
</dbReference>
<dbReference type="EMBL" id="AJ237968">
    <property type="protein sequence ID" value="CAB40838.1"/>
    <property type="molecule type" value="mRNA"/>
</dbReference>
<dbReference type="EMBL" id="AE014134">
    <property type="protein sequence ID" value="AAF51211.1"/>
    <property type="molecule type" value="Genomic_DNA"/>
</dbReference>
<dbReference type="EMBL" id="AY071220">
    <property type="protein sequence ID" value="AAL48842.1"/>
    <property type="molecule type" value="mRNA"/>
</dbReference>
<dbReference type="RefSeq" id="NP_477418.1">
    <property type="nucleotide sequence ID" value="NM_058070.6"/>
</dbReference>
<dbReference type="SMR" id="Q9XZT7"/>
<dbReference type="BioGRID" id="59691">
    <property type="interactions" value="28"/>
</dbReference>
<dbReference type="ComplexPortal" id="CPX-2644">
    <property type="entry name" value="SAGA complex"/>
</dbReference>
<dbReference type="DIP" id="DIP-19377N"/>
<dbReference type="FunCoup" id="Q9XZT7">
    <property type="interactions" value="516"/>
</dbReference>
<dbReference type="IntAct" id="Q9XZT7">
    <property type="interactions" value="9"/>
</dbReference>
<dbReference type="STRING" id="7227.FBpp0077415"/>
<dbReference type="PaxDb" id="7227-FBpp0077415"/>
<dbReference type="EnsemblMetazoa" id="FBtr0077735">
    <property type="protein sequence ID" value="FBpp0077415"/>
    <property type="gene ID" value="FBgn0026324"/>
</dbReference>
<dbReference type="GeneID" id="33468"/>
<dbReference type="KEGG" id="dme:Dmel_CG3069"/>
<dbReference type="AGR" id="FB:FBgn0026324"/>
<dbReference type="CTD" id="33468"/>
<dbReference type="FlyBase" id="FBgn0026324">
    <property type="gene designation" value="Taf10b"/>
</dbReference>
<dbReference type="VEuPathDB" id="VectorBase:FBgn0026324"/>
<dbReference type="eggNOG" id="KOG3423">
    <property type="taxonomic scope" value="Eukaryota"/>
</dbReference>
<dbReference type="GeneTree" id="ENSGT00390000009368"/>
<dbReference type="HOGENOM" id="CLU_064104_4_1_1"/>
<dbReference type="InParanoid" id="Q9XZT7"/>
<dbReference type="OMA" id="GFECDDV"/>
<dbReference type="OrthoDB" id="154356at2759"/>
<dbReference type="PhylomeDB" id="Q9XZT7"/>
<dbReference type="Reactome" id="R-DME-5689880">
    <property type="pathway name" value="Ub-specific processing proteases"/>
</dbReference>
<dbReference type="Reactome" id="R-DME-674695">
    <property type="pathway name" value="RNA Polymerase II Pre-transcription Events"/>
</dbReference>
<dbReference type="Reactome" id="R-DME-6804756">
    <property type="pathway name" value="Regulation of TP53 Activity through Phosphorylation"/>
</dbReference>
<dbReference type="Reactome" id="R-DME-73776">
    <property type="pathway name" value="RNA Polymerase II Promoter Escape"/>
</dbReference>
<dbReference type="Reactome" id="R-DME-73779">
    <property type="pathway name" value="RNA Polymerase II Transcription Pre-Initiation And Promoter Opening"/>
</dbReference>
<dbReference type="Reactome" id="R-DME-75953">
    <property type="pathway name" value="RNA Polymerase II Transcription Initiation"/>
</dbReference>
<dbReference type="Reactome" id="R-DME-76042">
    <property type="pathway name" value="RNA Polymerase II Transcription Initiation And Promoter Clearance"/>
</dbReference>
<dbReference type="BioGRID-ORCS" id="33468">
    <property type="hits" value="0 hits in 1 CRISPR screen"/>
</dbReference>
<dbReference type="GenomeRNAi" id="33468"/>
<dbReference type="PRO" id="PR:Q9XZT7"/>
<dbReference type="Proteomes" id="UP000000803">
    <property type="component" value="Chromosome 2L"/>
</dbReference>
<dbReference type="Bgee" id="FBgn0026324">
    <property type="expression patterns" value="Expressed in adult CCAP neuron in brain and 132 other cell types or tissues"/>
</dbReference>
<dbReference type="GO" id="GO:0005737">
    <property type="term" value="C:cytoplasm"/>
    <property type="evidence" value="ECO:0000314"/>
    <property type="project" value="FlyBase"/>
</dbReference>
<dbReference type="GO" id="GO:0005634">
    <property type="term" value="C:nucleus"/>
    <property type="evidence" value="ECO:0000314"/>
    <property type="project" value="FlyBase"/>
</dbReference>
<dbReference type="GO" id="GO:0000124">
    <property type="term" value="C:SAGA complex"/>
    <property type="evidence" value="ECO:0000314"/>
    <property type="project" value="FlyBase"/>
</dbReference>
<dbReference type="GO" id="GO:0005669">
    <property type="term" value="C:transcription factor TFIID complex"/>
    <property type="evidence" value="ECO:0000314"/>
    <property type="project" value="UniProtKB"/>
</dbReference>
<dbReference type="GO" id="GO:1990841">
    <property type="term" value="F:promoter-specific chromatin binding"/>
    <property type="evidence" value="ECO:0000318"/>
    <property type="project" value="GO_Central"/>
</dbReference>
<dbReference type="GO" id="GO:0006367">
    <property type="term" value="P:transcription initiation at RNA polymerase II promoter"/>
    <property type="evidence" value="ECO:0000314"/>
    <property type="project" value="UniProtKB"/>
</dbReference>
<dbReference type="CDD" id="cd07982">
    <property type="entry name" value="HFD_TAF10"/>
    <property type="match status" value="1"/>
</dbReference>
<dbReference type="InterPro" id="IPR003923">
    <property type="entry name" value="TAF10"/>
</dbReference>
<dbReference type="PANTHER" id="PTHR21242">
    <property type="entry name" value="TRANSCRIPTION INITIATION FACTOR TFIID SUBUNIT 10"/>
    <property type="match status" value="1"/>
</dbReference>
<dbReference type="PANTHER" id="PTHR21242:SF0">
    <property type="entry name" value="TRANSCRIPTION INITIATION FACTOR TFIID SUBUNIT 10"/>
    <property type="match status" value="1"/>
</dbReference>
<dbReference type="Pfam" id="PF03540">
    <property type="entry name" value="TAF10"/>
    <property type="match status" value="1"/>
</dbReference>
<dbReference type="PIRSF" id="PIRSF017246">
    <property type="entry name" value="TFIID_TAF10"/>
    <property type="match status" value="1"/>
</dbReference>
<dbReference type="PRINTS" id="PR01443">
    <property type="entry name" value="TFIID30KDSUB"/>
</dbReference>